<feature type="chain" id="PRO_1000213150" description="Undecaprenyl-diphosphatase">
    <location>
        <begin position="1"/>
        <end position="273"/>
    </location>
</feature>
<feature type="transmembrane region" description="Helical" evidence="1">
    <location>
        <begin position="6"/>
        <end position="26"/>
    </location>
</feature>
<feature type="transmembrane region" description="Helical" evidence="1">
    <location>
        <begin position="45"/>
        <end position="65"/>
    </location>
</feature>
<feature type="transmembrane region" description="Helical" evidence="1">
    <location>
        <begin position="90"/>
        <end position="110"/>
    </location>
</feature>
<feature type="transmembrane region" description="Helical" evidence="1">
    <location>
        <begin position="116"/>
        <end position="136"/>
    </location>
</feature>
<feature type="transmembrane region" description="Helical" evidence="1">
    <location>
        <begin position="190"/>
        <end position="210"/>
    </location>
</feature>
<feature type="transmembrane region" description="Helical" evidence="1">
    <location>
        <begin position="222"/>
        <end position="242"/>
    </location>
</feature>
<feature type="transmembrane region" description="Helical" evidence="1">
    <location>
        <begin position="252"/>
        <end position="272"/>
    </location>
</feature>
<reference key="1">
    <citation type="journal article" date="2009" name="J. Bacteriol.">
        <title>Genomic sequencing reveals regulatory mutations and recombinational events in the widely used MC4100 lineage of Escherichia coli K-12.</title>
        <authorList>
            <person name="Ferenci T."/>
            <person name="Zhou Z."/>
            <person name="Betteridge T."/>
            <person name="Ren Y."/>
            <person name="Liu Y."/>
            <person name="Feng L."/>
            <person name="Reeves P.R."/>
            <person name="Wang L."/>
        </authorList>
    </citation>
    <scope>NUCLEOTIDE SEQUENCE [LARGE SCALE GENOMIC DNA]</scope>
    <source>
        <strain>K12 / MC4100 / BW2952</strain>
    </source>
</reference>
<dbReference type="EC" id="3.6.1.27" evidence="1"/>
<dbReference type="EMBL" id="CP001396">
    <property type="protein sequence ID" value="ACR65756.1"/>
    <property type="molecule type" value="Genomic_DNA"/>
</dbReference>
<dbReference type="SMR" id="C4ZQX4"/>
<dbReference type="KEGG" id="ebw:BWG_2768"/>
<dbReference type="HOGENOM" id="CLU_060296_2_0_6"/>
<dbReference type="GO" id="GO:0005886">
    <property type="term" value="C:plasma membrane"/>
    <property type="evidence" value="ECO:0007669"/>
    <property type="project" value="UniProtKB-SubCell"/>
</dbReference>
<dbReference type="GO" id="GO:0050380">
    <property type="term" value="F:undecaprenyl-diphosphatase activity"/>
    <property type="evidence" value="ECO:0007669"/>
    <property type="project" value="UniProtKB-UniRule"/>
</dbReference>
<dbReference type="GO" id="GO:0071555">
    <property type="term" value="P:cell wall organization"/>
    <property type="evidence" value="ECO:0007669"/>
    <property type="project" value="UniProtKB-KW"/>
</dbReference>
<dbReference type="GO" id="GO:0009252">
    <property type="term" value="P:peptidoglycan biosynthetic process"/>
    <property type="evidence" value="ECO:0007669"/>
    <property type="project" value="UniProtKB-KW"/>
</dbReference>
<dbReference type="GO" id="GO:0008360">
    <property type="term" value="P:regulation of cell shape"/>
    <property type="evidence" value="ECO:0007669"/>
    <property type="project" value="UniProtKB-KW"/>
</dbReference>
<dbReference type="GO" id="GO:0046677">
    <property type="term" value="P:response to antibiotic"/>
    <property type="evidence" value="ECO:0007669"/>
    <property type="project" value="UniProtKB-UniRule"/>
</dbReference>
<dbReference type="HAMAP" id="MF_01006">
    <property type="entry name" value="Undec_diphosphatase"/>
    <property type="match status" value="1"/>
</dbReference>
<dbReference type="InterPro" id="IPR003824">
    <property type="entry name" value="UppP"/>
</dbReference>
<dbReference type="NCBIfam" id="NF001388">
    <property type="entry name" value="PRK00281.1-1"/>
    <property type="match status" value="1"/>
</dbReference>
<dbReference type="NCBIfam" id="NF001389">
    <property type="entry name" value="PRK00281.1-2"/>
    <property type="match status" value="1"/>
</dbReference>
<dbReference type="NCBIfam" id="NF001390">
    <property type="entry name" value="PRK00281.1-4"/>
    <property type="match status" value="1"/>
</dbReference>
<dbReference type="NCBIfam" id="TIGR00753">
    <property type="entry name" value="undec_PP_bacA"/>
    <property type="match status" value="1"/>
</dbReference>
<dbReference type="PANTHER" id="PTHR30622">
    <property type="entry name" value="UNDECAPRENYL-DIPHOSPHATASE"/>
    <property type="match status" value="1"/>
</dbReference>
<dbReference type="PANTHER" id="PTHR30622:SF3">
    <property type="entry name" value="UNDECAPRENYL-DIPHOSPHATASE"/>
    <property type="match status" value="1"/>
</dbReference>
<dbReference type="Pfam" id="PF02673">
    <property type="entry name" value="BacA"/>
    <property type="match status" value="1"/>
</dbReference>
<accession>C4ZQX4</accession>
<evidence type="ECO:0000255" key="1">
    <source>
        <dbReference type="HAMAP-Rule" id="MF_01006"/>
    </source>
</evidence>
<proteinExistence type="inferred from homology"/>
<protein>
    <recommendedName>
        <fullName evidence="1">Undecaprenyl-diphosphatase</fullName>
        <ecNumber evidence="1">3.6.1.27</ecNumber>
    </recommendedName>
    <alternativeName>
        <fullName evidence="1">Bacitracin resistance protein</fullName>
    </alternativeName>
    <alternativeName>
        <fullName evidence="1">Undecaprenyl pyrophosphate phosphatase</fullName>
    </alternativeName>
</protein>
<keyword id="KW-0046">Antibiotic resistance</keyword>
<keyword id="KW-0997">Cell inner membrane</keyword>
<keyword id="KW-1003">Cell membrane</keyword>
<keyword id="KW-0133">Cell shape</keyword>
<keyword id="KW-0961">Cell wall biogenesis/degradation</keyword>
<keyword id="KW-0378">Hydrolase</keyword>
<keyword id="KW-0472">Membrane</keyword>
<keyword id="KW-0573">Peptidoglycan synthesis</keyword>
<keyword id="KW-0812">Transmembrane</keyword>
<keyword id="KW-1133">Transmembrane helix</keyword>
<comment type="function">
    <text evidence="1">Catalyzes the dephosphorylation of undecaprenyl diphosphate (UPP). Confers resistance to bacitracin.</text>
</comment>
<comment type="catalytic activity">
    <reaction evidence="1">
        <text>di-trans,octa-cis-undecaprenyl diphosphate + H2O = di-trans,octa-cis-undecaprenyl phosphate + phosphate + H(+)</text>
        <dbReference type="Rhea" id="RHEA:28094"/>
        <dbReference type="ChEBI" id="CHEBI:15377"/>
        <dbReference type="ChEBI" id="CHEBI:15378"/>
        <dbReference type="ChEBI" id="CHEBI:43474"/>
        <dbReference type="ChEBI" id="CHEBI:58405"/>
        <dbReference type="ChEBI" id="CHEBI:60392"/>
        <dbReference type="EC" id="3.6.1.27"/>
    </reaction>
</comment>
<comment type="subcellular location">
    <subcellularLocation>
        <location evidence="1">Cell inner membrane</location>
        <topology evidence="1">Multi-pass membrane protein</topology>
    </subcellularLocation>
</comment>
<comment type="miscellaneous">
    <text>Bacitracin is thought to be involved in the inhibition of peptidoglycan synthesis by sequestering undecaprenyl diphosphate, thereby reducing the pool of lipid carrier available.</text>
</comment>
<comment type="similarity">
    <text evidence="1">Belongs to the UppP family.</text>
</comment>
<organism>
    <name type="scientific">Escherichia coli (strain K12 / MC4100 / BW2952)</name>
    <dbReference type="NCBI Taxonomy" id="595496"/>
    <lineage>
        <taxon>Bacteria</taxon>
        <taxon>Pseudomonadati</taxon>
        <taxon>Pseudomonadota</taxon>
        <taxon>Gammaproteobacteria</taxon>
        <taxon>Enterobacterales</taxon>
        <taxon>Enterobacteriaceae</taxon>
        <taxon>Escherichia</taxon>
    </lineage>
</organism>
<gene>
    <name evidence="1" type="primary">uppP</name>
    <name type="ordered locus">BWG_2768</name>
</gene>
<sequence length="273" mass="29759">MSDMHSLLIAAILGVVEGLTEFLPVSSTGHMIIVGHLLGFEGDTAKTFEVVIQLGSILAVVVMFWRRLFGLIGIHFGRPLQHEGESKGRLTLIHILLGMIPAVVLGLLFHDTIKSLFNPINVMYALVVGGLLLIAAECLKPKEPRAPGLDDMTYRQAFMIGCFQCLALWPGFSRSGATISGGMLMGVSRYAASEFSFLLAVPMMMGATALDLYKSWGFLTSGDIPMFAVGFITAFVVALIAIKTFLQLIKRISFIPFAIYRFIVAAAVYVVFF</sequence>
<name>UPPP_ECOBW</name>